<protein>
    <recommendedName>
        <fullName evidence="5">Large ribosomal subunit protein uL23c</fullName>
    </recommendedName>
    <alternativeName>
        <fullName evidence="4">50S ribosomal protein L23, chloroplastic</fullName>
    </alternativeName>
    <alternativeName>
        <fullName>PRPL23</fullName>
    </alternativeName>
</protein>
<keyword id="KW-0002">3D-structure</keyword>
<keyword id="KW-0150">Chloroplast</keyword>
<keyword id="KW-0903">Direct protein sequencing</keyword>
<keyword id="KW-0934">Plastid</keyword>
<keyword id="KW-1185">Reference proteome</keyword>
<keyword id="KW-0687">Ribonucleoprotein</keyword>
<keyword id="KW-0689">Ribosomal protein</keyword>
<keyword id="KW-0694">RNA-binding</keyword>
<keyword id="KW-0699">rRNA-binding</keyword>
<keyword id="KW-0809">Transit peptide</keyword>
<sequence>MATTAPNLHSLSSSFAFSNPSSNVSATSFTFQIPNKKAQISCISSKKLHTQKSFNFHDAVTPMNKPSFGRDLMVAQATEAVAPTTEEAATSQPKTSKKAKKLKYPRRILDVYQILQSPIITEAAIKNIADENSLLFTVDVRADKKMIREAISNFFGVKVRKVNTLIRPDGTKKAYIMLNKEYNASELAKKIGIFPGGN</sequence>
<organism>
    <name type="scientific">Spinacia oleracea</name>
    <name type="common">Spinach</name>
    <dbReference type="NCBI Taxonomy" id="3562"/>
    <lineage>
        <taxon>Eukaryota</taxon>
        <taxon>Viridiplantae</taxon>
        <taxon>Streptophyta</taxon>
        <taxon>Embryophyta</taxon>
        <taxon>Tracheophyta</taxon>
        <taxon>Spermatophyta</taxon>
        <taxon>Magnoliopsida</taxon>
        <taxon>eudicotyledons</taxon>
        <taxon>Gunneridae</taxon>
        <taxon>Pentapetalae</taxon>
        <taxon>Caryophyllales</taxon>
        <taxon>Chenopodiaceae</taxon>
        <taxon>Chenopodioideae</taxon>
        <taxon>Anserineae</taxon>
        <taxon>Spinacia</taxon>
    </lineage>
</organism>
<reference key="1">
    <citation type="submission" date="1995-07" db="EMBL/GenBank/DDBJ databases">
        <title>Nucleotide sequence of the cDNA coding for chloroplast ribosomal protein L23 of spinach.</title>
        <authorList>
            <person name="Jayabaskaran C."/>
            <person name="Subramanian A.R."/>
        </authorList>
    </citation>
    <scope>NUCLEOTIDE SEQUENCE [MRNA]</scope>
    <source>
        <strain>cv. Matador</strain>
    </source>
</reference>
<reference key="2">
    <citation type="journal article" date="2014" name="Nature">
        <title>The genome of the recently domesticated crop plant sugar beet (Beta vulgaris).</title>
        <authorList>
            <person name="Dohm J.C."/>
            <person name="Minoche A.E."/>
            <person name="Holtgraewe D."/>
            <person name="Capella-Gutierrez S."/>
            <person name="Zakrzewski F."/>
            <person name="Tafer H."/>
            <person name="Rupp O."/>
            <person name="Soerensen T.R."/>
            <person name="Stracke R."/>
            <person name="Reinhardt R."/>
            <person name="Goesmann A."/>
            <person name="Kraft T."/>
            <person name="Schulz B."/>
            <person name="Stadler P.F."/>
            <person name="Schmidt T."/>
            <person name="Gabaldon T."/>
            <person name="Lehrach H."/>
            <person name="Weisshaar B."/>
            <person name="Himmelbauer H."/>
        </authorList>
    </citation>
    <scope>NUCLEOTIDE SEQUENCE [LARGE SCALE GENOMIC DNA]</scope>
    <source>
        <strain>cv. Viroflay</strain>
        <tissue>Leaf</tissue>
    </source>
</reference>
<reference key="3">
    <citation type="journal article" date="1994" name="J. Mol. Biol.">
        <title>Protein substitution in chloroplast ribosome evolution. A eukaryotic cytosolic protein has replaced its organelle homologue (L23) in spinach.</title>
        <authorList>
            <person name="Bubunenko M.G."/>
            <person name="Schmidt J."/>
            <person name="Subramanian A.R."/>
        </authorList>
    </citation>
    <scope>PROTEIN SEQUENCE OF 77-113; 122-136 AND 156-193</scope>
    <scope>IDENTIFICATION AS A SUBUNIT OF THE CHLOROPLAST RIBOSOME</scope>
    <scope>DEMONSTRATION OF TWO FORMS</scope>
    <source>
        <strain>cv. Alwaro</strain>
        <tissue>Leaf</tissue>
    </source>
</reference>
<reference key="4">
    <citation type="journal article" date="2000" name="J. Biol. Chem.">
        <title>The plastid ribosomal proteins. Identification of all the proteins in the 50S subunit of an organelle ribosome (chloroplast).</title>
        <authorList>
            <person name="Yamaguchi K."/>
            <person name="Subramanian A.R."/>
        </authorList>
    </citation>
    <scope>PROTEIN SEQUENCE OF 77-82</scope>
    <scope>SUBUNIT</scope>
    <scope>SUBCELLULAR LOCATION</scope>
    <scope>MASS SPECTROMETRY</scope>
    <source>
        <strain>cv. Alwaro</strain>
        <tissue>Leaf</tissue>
    </source>
</reference>
<reference key="5">
    <citation type="journal article" date="2007" name="Proc. Natl. Acad. Sci. U.S.A.">
        <title>Cryo-EM study of the spinach chloroplast ribosome reveals the structural and functional roles of plastid-specific ribosomal proteins.</title>
        <authorList>
            <person name="Sharma M.R."/>
            <person name="Wilson D.N."/>
            <person name="Datta P.P."/>
            <person name="Barat C."/>
            <person name="Schluenzen F."/>
            <person name="Fucini P."/>
            <person name="Agrawal R.K."/>
        </authorList>
    </citation>
    <scope>STRUCTURE BY ELECTRON MICROSCOPY (9.4 ANGSTROMS)</scope>
</reference>
<reference key="6">
    <citation type="journal article" date="2016" name="Sci. Rep.">
        <title>Cryo-EM structure of the large subunit of the spinach chloroplast ribosome.</title>
        <authorList>
            <person name="Ahmed T."/>
            <person name="Yin Z."/>
            <person name="Bhushan S."/>
        </authorList>
    </citation>
    <scope>STRUCTURE BY ELECTRON MICROSCOPY (3.50 ANGSTROMS)</scope>
</reference>
<reference key="7">
    <citation type="journal article" date="2017" name="EMBO J.">
        <title>The complete structure of the chloroplast 70S ribosome in complex with translation factor pY.</title>
        <authorList>
            <person name="Bieri P."/>
            <person name="Leibundgut M."/>
            <person name="Saurer M."/>
            <person name="Boehringer D."/>
            <person name="Ban N."/>
        </authorList>
    </citation>
    <scope>STRUCTURE BY ELECTRON MICROSCOPY (3.25 ANGSTROMS)</scope>
    <scope>SUBUNIT</scope>
    <scope>SUBCELLULAR LOCATION</scope>
</reference>
<dbReference type="EMBL" id="X90414">
    <property type="protein sequence ID" value="CAA62040.1"/>
    <property type="molecule type" value="mRNA"/>
</dbReference>
<dbReference type="EMBL" id="KQ150936">
    <property type="protein sequence ID" value="KNA14201.1"/>
    <property type="molecule type" value="Genomic_DNA"/>
</dbReference>
<dbReference type="PDB" id="4V61">
    <property type="method" value="EM"/>
    <property type="resolution" value="9.40 A"/>
    <property type="chains" value="BV=1-198"/>
</dbReference>
<dbReference type="PDB" id="5H1S">
    <property type="method" value="EM"/>
    <property type="resolution" value="3.50 A"/>
    <property type="chains" value="V=77-198"/>
</dbReference>
<dbReference type="PDB" id="5MLC">
    <property type="method" value="EM"/>
    <property type="resolution" value="3.90 A"/>
    <property type="chains" value="V=1-198"/>
</dbReference>
<dbReference type="PDB" id="5MMI">
    <property type="method" value="EM"/>
    <property type="resolution" value="3.25 A"/>
    <property type="chains" value="U=1-198"/>
</dbReference>
<dbReference type="PDB" id="5MMM">
    <property type="method" value="EM"/>
    <property type="resolution" value="3.40 A"/>
    <property type="chains" value="U=1-198"/>
</dbReference>
<dbReference type="PDB" id="5X8P">
    <property type="method" value="EM"/>
    <property type="resolution" value="3.40 A"/>
    <property type="chains" value="U=77-198"/>
</dbReference>
<dbReference type="PDB" id="5X8T">
    <property type="method" value="EM"/>
    <property type="resolution" value="3.30 A"/>
    <property type="chains" value="U=77-198"/>
</dbReference>
<dbReference type="PDB" id="6ERI">
    <property type="method" value="EM"/>
    <property type="resolution" value="3.00 A"/>
    <property type="chains" value="AT=103-194"/>
</dbReference>
<dbReference type="PDBsum" id="4V61"/>
<dbReference type="PDBsum" id="5H1S"/>
<dbReference type="PDBsum" id="5MLC"/>
<dbReference type="PDBsum" id="5MMI"/>
<dbReference type="PDBsum" id="5MMM"/>
<dbReference type="PDBsum" id="5X8P"/>
<dbReference type="PDBsum" id="5X8T"/>
<dbReference type="PDBsum" id="6ERI"/>
<dbReference type="EMDB" id="EMD-3525"/>
<dbReference type="EMDB" id="EMD-3531"/>
<dbReference type="EMDB" id="EMD-3533"/>
<dbReference type="EMDB" id="EMD-3941"/>
<dbReference type="EMDB" id="EMD-6709"/>
<dbReference type="EMDB" id="EMD-6711"/>
<dbReference type="EMDB" id="EMD-9572"/>
<dbReference type="SMR" id="Q9LWB5"/>
<dbReference type="IntAct" id="Q9LWB5">
    <property type="interactions" value="1"/>
</dbReference>
<dbReference type="STRING" id="3562.Q9LWB5"/>
<dbReference type="Proteomes" id="UP001155700">
    <property type="component" value="Unplaced"/>
</dbReference>
<dbReference type="GO" id="GO:0009507">
    <property type="term" value="C:chloroplast"/>
    <property type="evidence" value="ECO:0007669"/>
    <property type="project" value="UniProtKB-SubCell"/>
</dbReference>
<dbReference type="GO" id="GO:0022625">
    <property type="term" value="C:cytosolic large ribosomal subunit"/>
    <property type="evidence" value="ECO:0000318"/>
    <property type="project" value="GO_Central"/>
</dbReference>
<dbReference type="GO" id="GO:0003729">
    <property type="term" value="F:mRNA binding"/>
    <property type="evidence" value="ECO:0007669"/>
    <property type="project" value="UniProtKB-ARBA"/>
</dbReference>
<dbReference type="GO" id="GO:0019843">
    <property type="term" value="F:rRNA binding"/>
    <property type="evidence" value="ECO:0007669"/>
    <property type="project" value="UniProtKB-KW"/>
</dbReference>
<dbReference type="GO" id="GO:0003735">
    <property type="term" value="F:structural constituent of ribosome"/>
    <property type="evidence" value="ECO:0000318"/>
    <property type="project" value="GO_Central"/>
</dbReference>
<dbReference type="GO" id="GO:0006412">
    <property type="term" value="P:translation"/>
    <property type="evidence" value="ECO:0007669"/>
    <property type="project" value="InterPro"/>
</dbReference>
<dbReference type="FunFam" id="3.30.70.330:FF:000532">
    <property type="entry name" value="50S ribosomal protein L23"/>
    <property type="match status" value="1"/>
</dbReference>
<dbReference type="Gene3D" id="3.30.70.330">
    <property type="match status" value="1"/>
</dbReference>
<dbReference type="HAMAP" id="MF_01369_A">
    <property type="entry name" value="Ribosomal_uL23_A"/>
    <property type="match status" value="1"/>
</dbReference>
<dbReference type="InterPro" id="IPR012677">
    <property type="entry name" value="Nucleotide-bd_a/b_plait_sf"/>
</dbReference>
<dbReference type="InterPro" id="IPR013025">
    <property type="entry name" value="Ribosomal_uL23-like"/>
</dbReference>
<dbReference type="InterPro" id="IPR012678">
    <property type="entry name" value="Ribosomal_uL23/eL15/eS24_sf"/>
</dbReference>
<dbReference type="NCBIfam" id="NF011118">
    <property type="entry name" value="PRK14548.1"/>
    <property type="match status" value="1"/>
</dbReference>
<dbReference type="PANTHER" id="PTHR11620">
    <property type="entry name" value="60S RIBOSOMAL PROTEIN L23A"/>
    <property type="match status" value="1"/>
</dbReference>
<dbReference type="Pfam" id="PF00276">
    <property type="entry name" value="Ribosomal_L23"/>
    <property type="match status" value="1"/>
</dbReference>
<dbReference type="SUPFAM" id="SSF54189">
    <property type="entry name" value="Ribosomal proteins S24e, L23 and L15e"/>
    <property type="match status" value="1"/>
</dbReference>
<feature type="transit peptide" description="Chloroplast" evidence="1 3">
    <location>
        <begin position="1"/>
        <end position="76"/>
    </location>
</feature>
<feature type="chain" id="PRO_5000146571" description="Large ribosomal subunit protein uL23c">
    <location>
        <begin position="77"/>
        <end position="198"/>
    </location>
</feature>
<feature type="sequence conflict" description="In Ref. 3; AA sequence." evidence="6" ref="3">
    <original>P</original>
    <variation>L</variation>
    <location>
        <position position="83"/>
    </location>
</feature>
<feature type="sequence conflict" description="In Ref. 3; AA sequence." evidence="6" ref="3">
    <original>P</original>
    <variation>N</variation>
    <location>
        <position position="93"/>
    </location>
</feature>
<feature type="sequence conflict" description="In Ref. 3; AA sequence." evidence="6" ref="3">
    <original>K</original>
    <variation>I</variation>
    <location>
        <position position="101"/>
    </location>
</feature>
<feature type="sequence conflict" description="In Ref. 3; AA sequence and 2; KNA14201." evidence="6" ref="3 2">
    <original>I</original>
    <variation>V</variation>
    <location>
        <position position="108"/>
    </location>
</feature>
<feature type="sequence conflict" description="In Ref. 3; AA sequence." evidence="6" ref="3">
    <original>T</original>
    <variation>TE</variation>
    <location>
        <position position="171"/>
    </location>
</feature>
<feature type="sequence conflict" description="In Ref. 3; AA sequence." evidence="6" ref="3">
    <original>L</original>
    <variation>I</variation>
    <location>
        <position position="178"/>
    </location>
</feature>
<feature type="sequence conflict" description="In Ref. 3; AA sequence." evidence="6" ref="3">
    <original>KKIGI</original>
    <variation>TEASK</variation>
    <location>
        <begin position="189"/>
        <end position="193"/>
    </location>
</feature>
<feature type="helix" evidence="9">
    <location>
        <begin position="111"/>
        <end position="113"/>
    </location>
</feature>
<feature type="strand" evidence="9">
    <location>
        <begin position="115"/>
        <end position="118"/>
    </location>
</feature>
<feature type="helix" evidence="9">
    <location>
        <begin position="122"/>
        <end position="131"/>
    </location>
</feature>
<feature type="strand" evidence="9">
    <location>
        <begin position="133"/>
        <end position="138"/>
    </location>
</feature>
<feature type="helix" evidence="9">
    <location>
        <begin position="144"/>
        <end position="154"/>
    </location>
</feature>
<feature type="strand" evidence="9">
    <location>
        <begin position="161"/>
        <end position="166"/>
    </location>
</feature>
<feature type="strand" evidence="9">
    <location>
        <begin position="172"/>
        <end position="177"/>
    </location>
</feature>
<feature type="strand" evidence="9">
    <location>
        <begin position="180"/>
        <end position="182"/>
    </location>
</feature>
<feature type="helix" evidence="9">
    <location>
        <begin position="184"/>
        <end position="191"/>
    </location>
</feature>
<gene>
    <name type="primary">RPL23</name>
    <name type="ORF">SOVF_109700</name>
</gene>
<accession>Q9LWB5</accession>
<accession>A0A0K9R3X1</accession>
<accession>Q9T2N4</accession>
<comment type="function">
    <text evidence="7 8">Component of the chloroplast ribosome (chloro-ribosome), a dedicated translation machinery responsible for the synthesis of chloroplast genome-encoded proteins, including proteins of the transcription and translation machinery and components of the photosynthetic apparatus.</text>
</comment>
<comment type="subunit">
    <text evidence="1 2">Component of the chloroplast large ribosomal subunit (LSU). Mature 70S chloroplast ribosomes of higher plants consist of a small (30S) and a large (50S) subunit. The 30S small subunit contains 1 molecule of ribosomal RNA (16S rRNA) and 24 different proteins. The 50S large subunit contains 3 rRNA molecules (23S, 5S and 4.5S rRNA) and 33 different proteins.</text>
</comment>
<comment type="subcellular location">
    <subcellularLocation>
        <location evidence="1 2">Plastid</location>
        <location evidence="1 2">Chloroplast</location>
    </subcellularLocation>
</comment>
<comment type="mass spectrometry"/>
<comment type="miscellaneous">
    <text evidence="3">Two forms of the protein exist; they have the same N-terminal sequence and approximately the same molecular weight.</text>
</comment>
<comment type="similarity">
    <text evidence="6">Belongs to the universal ribosomal protein uL23 family.</text>
</comment>
<evidence type="ECO:0000269" key="1">
    <source>
    </source>
</evidence>
<evidence type="ECO:0000269" key="2">
    <source>
    </source>
</evidence>
<evidence type="ECO:0000269" key="3">
    <source>
    </source>
</evidence>
<evidence type="ECO:0000303" key="4">
    <source>
    </source>
</evidence>
<evidence type="ECO:0000303" key="5">
    <source>
    </source>
</evidence>
<evidence type="ECO:0000305" key="6"/>
<evidence type="ECO:0000305" key="7">
    <source>
    </source>
</evidence>
<evidence type="ECO:0000305" key="8">
    <source>
    </source>
</evidence>
<evidence type="ECO:0007829" key="9">
    <source>
        <dbReference type="PDB" id="5MMI"/>
    </source>
</evidence>
<name>RK23_SPIOL</name>
<proteinExistence type="evidence at protein level"/>